<keyword id="KW-0012">Acyltransferase</keyword>
<keyword id="KW-0133">Cell shape</keyword>
<keyword id="KW-0961">Cell wall biogenesis/degradation</keyword>
<keyword id="KW-0963">Cytoplasm</keyword>
<keyword id="KW-0460">Magnesium</keyword>
<keyword id="KW-0479">Metal-binding</keyword>
<keyword id="KW-0511">Multifunctional enzyme</keyword>
<keyword id="KW-0548">Nucleotidyltransferase</keyword>
<keyword id="KW-0573">Peptidoglycan synthesis</keyword>
<keyword id="KW-0677">Repeat</keyword>
<keyword id="KW-0808">Transferase</keyword>
<name>GLMU_YERPY</name>
<dbReference type="EC" id="2.7.7.23" evidence="1"/>
<dbReference type="EC" id="2.3.1.157" evidence="1"/>
<dbReference type="EMBL" id="CP000950">
    <property type="protein sequence ID" value="ACA70484.1"/>
    <property type="molecule type" value="Genomic_DNA"/>
</dbReference>
<dbReference type="RefSeq" id="WP_002215550.1">
    <property type="nucleotide sequence ID" value="NZ_CP009792.1"/>
</dbReference>
<dbReference type="SMR" id="B1JRN4"/>
<dbReference type="GeneID" id="57974605"/>
<dbReference type="KEGG" id="ypy:YPK_4228"/>
<dbReference type="PATRIC" id="fig|502800.11.peg.578"/>
<dbReference type="UniPathway" id="UPA00113">
    <property type="reaction ID" value="UER00532"/>
</dbReference>
<dbReference type="UniPathway" id="UPA00113">
    <property type="reaction ID" value="UER00533"/>
</dbReference>
<dbReference type="UniPathway" id="UPA00973"/>
<dbReference type="GO" id="GO:0005737">
    <property type="term" value="C:cytoplasm"/>
    <property type="evidence" value="ECO:0007669"/>
    <property type="project" value="UniProtKB-SubCell"/>
</dbReference>
<dbReference type="GO" id="GO:0016020">
    <property type="term" value="C:membrane"/>
    <property type="evidence" value="ECO:0007669"/>
    <property type="project" value="GOC"/>
</dbReference>
<dbReference type="GO" id="GO:0019134">
    <property type="term" value="F:glucosamine-1-phosphate N-acetyltransferase activity"/>
    <property type="evidence" value="ECO:0007669"/>
    <property type="project" value="UniProtKB-UniRule"/>
</dbReference>
<dbReference type="GO" id="GO:0000287">
    <property type="term" value="F:magnesium ion binding"/>
    <property type="evidence" value="ECO:0007669"/>
    <property type="project" value="UniProtKB-UniRule"/>
</dbReference>
<dbReference type="GO" id="GO:0003977">
    <property type="term" value="F:UDP-N-acetylglucosamine diphosphorylase activity"/>
    <property type="evidence" value="ECO:0007669"/>
    <property type="project" value="UniProtKB-UniRule"/>
</dbReference>
<dbReference type="GO" id="GO:0000902">
    <property type="term" value="P:cell morphogenesis"/>
    <property type="evidence" value="ECO:0007669"/>
    <property type="project" value="UniProtKB-UniRule"/>
</dbReference>
<dbReference type="GO" id="GO:0071555">
    <property type="term" value="P:cell wall organization"/>
    <property type="evidence" value="ECO:0007669"/>
    <property type="project" value="UniProtKB-KW"/>
</dbReference>
<dbReference type="GO" id="GO:0009245">
    <property type="term" value="P:lipid A biosynthetic process"/>
    <property type="evidence" value="ECO:0007669"/>
    <property type="project" value="UniProtKB-UniRule"/>
</dbReference>
<dbReference type="GO" id="GO:0009252">
    <property type="term" value="P:peptidoglycan biosynthetic process"/>
    <property type="evidence" value="ECO:0007669"/>
    <property type="project" value="UniProtKB-UniRule"/>
</dbReference>
<dbReference type="GO" id="GO:0008360">
    <property type="term" value="P:regulation of cell shape"/>
    <property type="evidence" value="ECO:0007669"/>
    <property type="project" value="UniProtKB-KW"/>
</dbReference>
<dbReference type="GO" id="GO:0006048">
    <property type="term" value="P:UDP-N-acetylglucosamine biosynthetic process"/>
    <property type="evidence" value="ECO:0007669"/>
    <property type="project" value="UniProtKB-UniPathway"/>
</dbReference>
<dbReference type="CDD" id="cd02540">
    <property type="entry name" value="GT2_GlmU_N_bac"/>
    <property type="match status" value="1"/>
</dbReference>
<dbReference type="CDD" id="cd03353">
    <property type="entry name" value="LbH_GlmU_C"/>
    <property type="match status" value="1"/>
</dbReference>
<dbReference type="FunFam" id="2.160.10.10:FF:000011">
    <property type="entry name" value="Bifunctional protein GlmU"/>
    <property type="match status" value="1"/>
</dbReference>
<dbReference type="FunFam" id="3.90.550.10:FF:000006">
    <property type="entry name" value="Bifunctional protein GlmU"/>
    <property type="match status" value="1"/>
</dbReference>
<dbReference type="Gene3D" id="2.160.10.10">
    <property type="entry name" value="Hexapeptide repeat proteins"/>
    <property type="match status" value="1"/>
</dbReference>
<dbReference type="Gene3D" id="3.90.550.10">
    <property type="entry name" value="Spore Coat Polysaccharide Biosynthesis Protein SpsA, Chain A"/>
    <property type="match status" value="1"/>
</dbReference>
<dbReference type="HAMAP" id="MF_01631">
    <property type="entry name" value="GlmU"/>
    <property type="match status" value="1"/>
</dbReference>
<dbReference type="InterPro" id="IPR005882">
    <property type="entry name" value="Bifunctional_GlmU"/>
</dbReference>
<dbReference type="InterPro" id="IPR050065">
    <property type="entry name" value="GlmU-like"/>
</dbReference>
<dbReference type="InterPro" id="IPR038009">
    <property type="entry name" value="GlmU_C_LbH"/>
</dbReference>
<dbReference type="InterPro" id="IPR001451">
    <property type="entry name" value="Hexapep"/>
</dbReference>
<dbReference type="InterPro" id="IPR018357">
    <property type="entry name" value="Hexapep_transf_CS"/>
</dbReference>
<dbReference type="InterPro" id="IPR025877">
    <property type="entry name" value="MobA-like_NTP_Trfase"/>
</dbReference>
<dbReference type="InterPro" id="IPR029044">
    <property type="entry name" value="Nucleotide-diphossugar_trans"/>
</dbReference>
<dbReference type="InterPro" id="IPR011004">
    <property type="entry name" value="Trimer_LpxA-like_sf"/>
</dbReference>
<dbReference type="NCBIfam" id="TIGR01173">
    <property type="entry name" value="glmU"/>
    <property type="match status" value="1"/>
</dbReference>
<dbReference type="NCBIfam" id="NF006986">
    <property type="entry name" value="PRK09451.1"/>
    <property type="match status" value="1"/>
</dbReference>
<dbReference type="PANTHER" id="PTHR43584:SF3">
    <property type="entry name" value="BIFUNCTIONAL PROTEIN GLMU"/>
    <property type="match status" value="1"/>
</dbReference>
<dbReference type="PANTHER" id="PTHR43584">
    <property type="entry name" value="NUCLEOTIDYL TRANSFERASE"/>
    <property type="match status" value="1"/>
</dbReference>
<dbReference type="Pfam" id="PF00132">
    <property type="entry name" value="Hexapep"/>
    <property type="match status" value="1"/>
</dbReference>
<dbReference type="Pfam" id="PF12804">
    <property type="entry name" value="NTP_transf_3"/>
    <property type="match status" value="1"/>
</dbReference>
<dbReference type="SUPFAM" id="SSF53448">
    <property type="entry name" value="Nucleotide-diphospho-sugar transferases"/>
    <property type="match status" value="1"/>
</dbReference>
<dbReference type="SUPFAM" id="SSF51161">
    <property type="entry name" value="Trimeric LpxA-like enzymes"/>
    <property type="match status" value="1"/>
</dbReference>
<dbReference type="PROSITE" id="PS00101">
    <property type="entry name" value="HEXAPEP_TRANSFERASES"/>
    <property type="match status" value="1"/>
</dbReference>
<comment type="function">
    <text evidence="1">Catalyzes the last two sequential reactions in the de novo biosynthetic pathway for UDP-N-acetylglucosamine (UDP-GlcNAc). The C-terminal domain catalyzes the transfer of acetyl group from acetyl coenzyme A to glucosamine-1-phosphate (GlcN-1-P) to produce N-acetylglucosamine-1-phosphate (GlcNAc-1-P), which is converted into UDP-GlcNAc by the transfer of uridine 5-monophosphate (from uridine 5-triphosphate), a reaction catalyzed by the N-terminal domain.</text>
</comment>
<comment type="catalytic activity">
    <reaction evidence="1">
        <text>alpha-D-glucosamine 1-phosphate + acetyl-CoA = N-acetyl-alpha-D-glucosamine 1-phosphate + CoA + H(+)</text>
        <dbReference type="Rhea" id="RHEA:13725"/>
        <dbReference type="ChEBI" id="CHEBI:15378"/>
        <dbReference type="ChEBI" id="CHEBI:57287"/>
        <dbReference type="ChEBI" id="CHEBI:57288"/>
        <dbReference type="ChEBI" id="CHEBI:57776"/>
        <dbReference type="ChEBI" id="CHEBI:58516"/>
        <dbReference type="EC" id="2.3.1.157"/>
    </reaction>
</comment>
<comment type="catalytic activity">
    <reaction evidence="1">
        <text>N-acetyl-alpha-D-glucosamine 1-phosphate + UTP + H(+) = UDP-N-acetyl-alpha-D-glucosamine + diphosphate</text>
        <dbReference type="Rhea" id="RHEA:13509"/>
        <dbReference type="ChEBI" id="CHEBI:15378"/>
        <dbReference type="ChEBI" id="CHEBI:33019"/>
        <dbReference type="ChEBI" id="CHEBI:46398"/>
        <dbReference type="ChEBI" id="CHEBI:57705"/>
        <dbReference type="ChEBI" id="CHEBI:57776"/>
        <dbReference type="EC" id="2.7.7.23"/>
    </reaction>
</comment>
<comment type="cofactor">
    <cofactor evidence="1">
        <name>Mg(2+)</name>
        <dbReference type="ChEBI" id="CHEBI:18420"/>
    </cofactor>
    <text evidence="1">Binds 1 Mg(2+) ion per subunit.</text>
</comment>
<comment type="pathway">
    <text evidence="1">Nucleotide-sugar biosynthesis; UDP-N-acetyl-alpha-D-glucosamine biosynthesis; N-acetyl-alpha-D-glucosamine 1-phosphate from alpha-D-glucosamine 6-phosphate (route II): step 2/2.</text>
</comment>
<comment type="pathway">
    <text evidence="1">Nucleotide-sugar biosynthesis; UDP-N-acetyl-alpha-D-glucosamine biosynthesis; UDP-N-acetyl-alpha-D-glucosamine from N-acetyl-alpha-D-glucosamine 1-phosphate: step 1/1.</text>
</comment>
<comment type="pathway">
    <text evidence="1">Bacterial outer membrane biogenesis; LPS lipid A biosynthesis.</text>
</comment>
<comment type="subunit">
    <text evidence="1">Homotrimer.</text>
</comment>
<comment type="subcellular location">
    <subcellularLocation>
        <location evidence="1">Cytoplasm</location>
    </subcellularLocation>
</comment>
<comment type="similarity">
    <text evidence="1">In the N-terminal section; belongs to the N-acetylglucosamine-1-phosphate uridyltransferase family.</text>
</comment>
<comment type="similarity">
    <text evidence="1">In the C-terminal section; belongs to the transferase hexapeptide repeat family.</text>
</comment>
<protein>
    <recommendedName>
        <fullName evidence="1">Bifunctional protein GlmU</fullName>
    </recommendedName>
    <domain>
        <recommendedName>
            <fullName evidence="1">UDP-N-acetylglucosamine pyrophosphorylase</fullName>
            <ecNumber evidence="1">2.7.7.23</ecNumber>
        </recommendedName>
        <alternativeName>
            <fullName evidence="1">N-acetylglucosamine-1-phosphate uridyltransferase</fullName>
        </alternativeName>
    </domain>
    <domain>
        <recommendedName>
            <fullName evidence="1">Glucosamine-1-phosphate N-acetyltransferase</fullName>
            <ecNumber evidence="1">2.3.1.157</ecNumber>
        </recommendedName>
    </domain>
</protein>
<accession>B1JRN4</accession>
<feature type="chain" id="PRO_1000186516" description="Bifunctional protein GlmU">
    <location>
        <begin position="1"/>
        <end position="456"/>
    </location>
</feature>
<feature type="region of interest" description="Pyrophosphorylase" evidence="1">
    <location>
        <begin position="1"/>
        <end position="229"/>
    </location>
</feature>
<feature type="region of interest" description="Linker" evidence="1">
    <location>
        <begin position="230"/>
        <end position="250"/>
    </location>
</feature>
<feature type="region of interest" description="N-acetyltransferase" evidence="1">
    <location>
        <begin position="251"/>
        <end position="456"/>
    </location>
</feature>
<feature type="active site" description="Proton acceptor" evidence="1">
    <location>
        <position position="363"/>
    </location>
</feature>
<feature type="binding site" evidence="1">
    <location>
        <begin position="11"/>
        <end position="14"/>
    </location>
    <ligand>
        <name>UDP-N-acetyl-alpha-D-glucosamine</name>
        <dbReference type="ChEBI" id="CHEBI:57705"/>
    </ligand>
</feature>
<feature type="binding site" evidence="1">
    <location>
        <position position="25"/>
    </location>
    <ligand>
        <name>UDP-N-acetyl-alpha-D-glucosamine</name>
        <dbReference type="ChEBI" id="CHEBI:57705"/>
    </ligand>
</feature>
<feature type="binding site" evidence="1">
    <location>
        <position position="76"/>
    </location>
    <ligand>
        <name>UDP-N-acetyl-alpha-D-glucosamine</name>
        <dbReference type="ChEBI" id="CHEBI:57705"/>
    </ligand>
</feature>
<feature type="binding site" evidence="1">
    <location>
        <begin position="81"/>
        <end position="82"/>
    </location>
    <ligand>
        <name>UDP-N-acetyl-alpha-D-glucosamine</name>
        <dbReference type="ChEBI" id="CHEBI:57705"/>
    </ligand>
</feature>
<feature type="binding site" evidence="1">
    <location>
        <begin position="103"/>
        <end position="105"/>
    </location>
    <ligand>
        <name>UDP-N-acetyl-alpha-D-glucosamine</name>
        <dbReference type="ChEBI" id="CHEBI:57705"/>
    </ligand>
</feature>
<feature type="binding site" evidence="1">
    <location>
        <position position="105"/>
    </location>
    <ligand>
        <name>Mg(2+)</name>
        <dbReference type="ChEBI" id="CHEBI:18420"/>
    </ligand>
</feature>
<feature type="binding site" evidence="1">
    <location>
        <position position="140"/>
    </location>
    <ligand>
        <name>UDP-N-acetyl-alpha-D-glucosamine</name>
        <dbReference type="ChEBI" id="CHEBI:57705"/>
    </ligand>
</feature>
<feature type="binding site" evidence="1">
    <location>
        <position position="154"/>
    </location>
    <ligand>
        <name>UDP-N-acetyl-alpha-D-glucosamine</name>
        <dbReference type="ChEBI" id="CHEBI:57705"/>
    </ligand>
</feature>
<feature type="binding site" evidence="1">
    <location>
        <position position="169"/>
    </location>
    <ligand>
        <name>UDP-N-acetyl-alpha-D-glucosamine</name>
        <dbReference type="ChEBI" id="CHEBI:57705"/>
    </ligand>
</feature>
<feature type="binding site" evidence="1">
    <location>
        <position position="227"/>
    </location>
    <ligand>
        <name>Mg(2+)</name>
        <dbReference type="ChEBI" id="CHEBI:18420"/>
    </ligand>
</feature>
<feature type="binding site" evidence="1">
    <location>
        <position position="227"/>
    </location>
    <ligand>
        <name>UDP-N-acetyl-alpha-D-glucosamine</name>
        <dbReference type="ChEBI" id="CHEBI:57705"/>
    </ligand>
</feature>
<feature type="binding site" evidence="1">
    <location>
        <position position="333"/>
    </location>
    <ligand>
        <name>UDP-N-acetyl-alpha-D-glucosamine</name>
        <dbReference type="ChEBI" id="CHEBI:57705"/>
    </ligand>
</feature>
<feature type="binding site" evidence="1">
    <location>
        <position position="351"/>
    </location>
    <ligand>
        <name>UDP-N-acetyl-alpha-D-glucosamine</name>
        <dbReference type="ChEBI" id="CHEBI:57705"/>
    </ligand>
</feature>
<feature type="binding site" evidence="1">
    <location>
        <position position="366"/>
    </location>
    <ligand>
        <name>UDP-N-acetyl-alpha-D-glucosamine</name>
        <dbReference type="ChEBI" id="CHEBI:57705"/>
    </ligand>
</feature>
<feature type="binding site" evidence="1">
    <location>
        <position position="377"/>
    </location>
    <ligand>
        <name>UDP-N-acetyl-alpha-D-glucosamine</name>
        <dbReference type="ChEBI" id="CHEBI:57705"/>
    </ligand>
</feature>
<feature type="binding site" evidence="1">
    <location>
        <position position="380"/>
    </location>
    <ligand>
        <name>acetyl-CoA</name>
        <dbReference type="ChEBI" id="CHEBI:57288"/>
    </ligand>
</feature>
<feature type="binding site" evidence="1">
    <location>
        <begin position="386"/>
        <end position="387"/>
    </location>
    <ligand>
        <name>acetyl-CoA</name>
        <dbReference type="ChEBI" id="CHEBI:57288"/>
    </ligand>
</feature>
<feature type="binding site" evidence="1">
    <location>
        <position position="405"/>
    </location>
    <ligand>
        <name>acetyl-CoA</name>
        <dbReference type="ChEBI" id="CHEBI:57288"/>
    </ligand>
</feature>
<feature type="binding site" evidence="1">
    <location>
        <position position="423"/>
    </location>
    <ligand>
        <name>acetyl-CoA</name>
        <dbReference type="ChEBI" id="CHEBI:57288"/>
    </ligand>
</feature>
<feature type="binding site" evidence="1">
    <location>
        <position position="440"/>
    </location>
    <ligand>
        <name>acetyl-CoA</name>
        <dbReference type="ChEBI" id="CHEBI:57288"/>
    </ligand>
</feature>
<reference key="1">
    <citation type="submission" date="2008-02" db="EMBL/GenBank/DDBJ databases">
        <title>Complete sequence of Yersinia pseudotuberculosis YPIII.</title>
        <authorList>
            <consortium name="US DOE Joint Genome Institute"/>
            <person name="Copeland A."/>
            <person name="Lucas S."/>
            <person name="Lapidus A."/>
            <person name="Glavina del Rio T."/>
            <person name="Dalin E."/>
            <person name="Tice H."/>
            <person name="Bruce D."/>
            <person name="Goodwin L."/>
            <person name="Pitluck S."/>
            <person name="Munk A.C."/>
            <person name="Brettin T."/>
            <person name="Detter J.C."/>
            <person name="Han C."/>
            <person name="Tapia R."/>
            <person name="Schmutz J."/>
            <person name="Larimer F."/>
            <person name="Land M."/>
            <person name="Hauser L."/>
            <person name="Challacombe J.F."/>
            <person name="Green L."/>
            <person name="Lindler L.E."/>
            <person name="Nikolich M.P."/>
            <person name="Richardson P."/>
        </authorList>
    </citation>
    <scope>NUCLEOTIDE SEQUENCE [LARGE SCALE GENOMIC DNA]</scope>
    <source>
        <strain>YPIII</strain>
    </source>
</reference>
<proteinExistence type="inferred from homology"/>
<organism>
    <name type="scientific">Yersinia pseudotuberculosis serotype O:3 (strain YPIII)</name>
    <dbReference type="NCBI Taxonomy" id="502800"/>
    <lineage>
        <taxon>Bacteria</taxon>
        <taxon>Pseudomonadati</taxon>
        <taxon>Pseudomonadota</taxon>
        <taxon>Gammaproteobacteria</taxon>
        <taxon>Enterobacterales</taxon>
        <taxon>Yersiniaceae</taxon>
        <taxon>Yersinia</taxon>
    </lineage>
</organism>
<sequence>MSNSSMSVVILAAGKGTRMYSDLPKVLHPLAGKPMVQHVIDAAMKLGAQHVHLVYGHGGELLKKTLADPSLNWVLQAEQLGTGHAMQQAAPHFADDEDILMLYGDVPLISVDTLQRLLAAKPEGGIGLLTVKLDNPSGYGRIVRENGDVVGIVEHKDASDAQREINEINTGILVANGRDLKRWLSLLDNNNAQGEFYITDIIALAHADGKKIATVHPTRLSEVEGVNNRLQLSALERVFQTEQAEKLLLAGVMLLDPSRFDLRGELTHGRDITIDTNVIIEGHVILGDRVRIGTGCVLKNCVIGDDSEISPYTVLEDARLDANCTVGPFARLRPGAELAEGAHVGNFVEIKKARLGKGSKAGHLSYLGDAEIGAGVNIGAGTITCNYDGANKFKTIIGDDVFVGSDTQLVAPVTVANGATIGAGTTVTRDVAENELVISRVKQVHIQGWKRPVKKK</sequence>
<gene>
    <name evidence="1" type="primary">glmU</name>
    <name type="ordered locus">YPK_4228</name>
</gene>
<evidence type="ECO:0000255" key="1">
    <source>
        <dbReference type="HAMAP-Rule" id="MF_01631"/>
    </source>
</evidence>